<dbReference type="EMBL" id="AF321909">
    <property type="protein sequence ID" value="AAG42319.1"/>
    <property type="molecule type" value="mRNA"/>
</dbReference>
<dbReference type="EMBL" id="AK122205">
    <property type="protein sequence ID" value="BAC65487.1"/>
    <property type="status" value="ALT_INIT"/>
    <property type="molecule type" value="mRNA"/>
</dbReference>
<dbReference type="EMBL" id="AK052145">
    <property type="protein sequence ID" value="BAC34857.1"/>
    <property type="molecule type" value="mRNA"/>
</dbReference>
<dbReference type="EMBL" id="BC048174">
    <property type="protein sequence ID" value="AAH48174.1"/>
    <property type="molecule type" value="mRNA"/>
</dbReference>
<dbReference type="EMBL" id="BC050747">
    <property type="protein sequence ID" value="AAH50747.1"/>
    <property type="molecule type" value="mRNA"/>
</dbReference>
<dbReference type="CCDS" id="CCDS18710.1">
    <molecule id="Q80U78-1"/>
</dbReference>
<dbReference type="CCDS" id="CCDS51311.1">
    <molecule id="Q80U78-2"/>
</dbReference>
<dbReference type="CCDS" id="CCDS51312.1">
    <molecule id="Q80U78-3"/>
</dbReference>
<dbReference type="RefSeq" id="NP_001153075.1">
    <molecule id="Q80U78-2"/>
    <property type="nucleotide sequence ID" value="NM_001159603.2"/>
</dbReference>
<dbReference type="RefSeq" id="NP_001153076.1">
    <molecule id="Q80U78-3"/>
    <property type="nucleotide sequence ID" value="NM_001159604.2"/>
</dbReference>
<dbReference type="RefSeq" id="NP_109647.2">
    <molecule id="Q80U78-1"/>
    <property type="nucleotide sequence ID" value="NM_030722.3"/>
</dbReference>
<dbReference type="RefSeq" id="XP_036020454.1">
    <molecule id="Q80U78-1"/>
    <property type="nucleotide sequence ID" value="XM_036164561.1"/>
</dbReference>
<dbReference type="SMR" id="Q80U78"/>
<dbReference type="BioGRID" id="219849">
    <property type="interactions" value="4"/>
</dbReference>
<dbReference type="FunCoup" id="Q80U78">
    <property type="interactions" value="5180"/>
</dbReference>
<dbReference type="IntAct" id="Q80U78">
    <property type="interactions" value="4"/>
</dbReference>
<dbReference type="MINT" id="Q80U78"/>
<dbReference type="STRING" id="10090.ENSMUSP00000030315"/>
<dbReference type="GlyGen" id="Q80U78">
    <property type="glycosylation" value="8 sites, 1 O-linked glycan (7 sites)"/>
</dbReference>
<dbReference type="iPTMnet" id="Q80U78"/>
<dbReference type="PhosphoSitePlus" id="Q80U78"/>
<dbReference type="jPOST" id="Q80U78"/>
<dbReference type="PaxDb" id="10090-ENSMUSP00000030315"/>
<dbReference type="PeptideAtlas" id="Q80U78"/>
<dbReference type="ProteomicsDB" id="301922">
    <molecule id="Q80U78-1"/>
</dbReference>
<dbReference type="ProteomicsDB" id="301923">
    <molecule id="Q80U78-2"/>
</dbReference>
<dbReference type="ProteomicsDB" id="301924">
    <molecule id="Q80U78-3"/>
</dbReference>
<dbReference type="ProteomicsDB" id="301925">
    <molecule id="Q80U78-4"/>
</dbReference>
<dbReference type="Pumba" id="Q80U78"/>
<dbReference type="Antibodypedia" id="16718">
    <property type="antibodies" value="282 antibodies from 33 providers"/>
</dbReference>
<dbReference type="DNASU" id="80912"/>
<dbReference type="Ensembl" id="ENSMUST00000030315.13">
    <molecule id="Q80U78-1"/>
    <property type="protein sequence ID" value="ENSMUSP00000030315.7"/>
    <property type="gene ID" value="ENSMUSG00000028580.16"/>
</dbReference>
<dbReference type="Ensembl" id="ENSMUST00000097862.3">
    <molecule id="Q80U78-3"/>
    <property type="protein sequence ID" value="ENSMUSP00000095474.3"/>
    <property type="gene ID" value="ENSMUSG00000028580.16"/>
</dbReference>
<dbReference type="Ensembl" id="ENSMUST00000097864.9">
    <molecule id="Q80U78-2"/>
    <property type="protein sequence ID" value="ENSMUSP00000095476.3"/>
    <property type="gene ID" value="ENSMUSG00000028580.16"/>
</dbReference>
<dbReference type="GeneID" id="80912"/>
<dbReference type="KEGG" id="mmu:80912"/>
<dbReference type="UCSC" id="uc008uzl.2">
    <molecule id="Q80U78-4"/>
    <property type="organism name" value="mouse"/>
</dbReference>
<dbReference type="UCSC" id="uc008uzm.3">
    <molecule id="Q80U78-1"/>
    <property type="organism name" value="mouse"/>
</dbReference>
<dbReference type="UCSC" id="uc008uzn.3">
    <molecule id="Q80U78-2"/>
    <property type="organism name" value="mouse"/>
</dbReference>
<dbReference type="AGR" id="MGI:1931749"/>
<dbReference type="CTD" id="9698"/>
<dbReference type="MGI" id="MGI:1931749">
    <property type="gene designation" value="Pum1"/>
</dbReference>
<dbReference type="VEuPathDB" id="HostDB:ENSMUSG00000028580"/>
<dbReference type="eggNOG" id="KOG1488">
    <property type="taxonomic scope" value="Eukaryota"/>
</dbReference>
<dbReference type="GeneTree" id="ENSGT00940000158079"/>
<dbReference type="InParanoid" id="Q80U78"/>
<dbReference type="OMA" id="GDSMRIQ"/>
<dbReference type="OrthoDB" id="668540at2759"/>
<dbReference type="PhylomeDB" id="Q80U78"/>
<dbReference type="TreeFam" id="TF318160"/>
<dbReference type="Reactome" id="R-MMU-432722">
    <property type="pathway name" value="Golgi Associated Vesicle Biogenesis"/>
</dbReference>
<dbReference type="BioGRID-ORCS" id="80912">
    <property type="hits" value="7 hits in 76 CRISPR screens"/>
</dbReference>
<dbReference type="CD-CODE" id="764D0258">
    <property type="entry name" value="Neuronal RNP granule"/>
</dbReference>
<dbReference type="ChiTaRS" id="Pum1">
    <property type="organism name" value="mouse"/>
</dbReference>
<dbReference type="PRO" id="PR:Q80U78"/>
<dbReference type="Proteomes" id="UP000000589">
    <property type="component" value="Chromosome 4"/>
</dbReference>
<dbReference type="RNAct" id="Q80U78">
    <property type="molecule type" value="protein"/>
</dbReference>
<dbReference type="Bgee" id="ENSMUSG00000028580">
    <property type="expression patterns" value="Expressed in embryonic brain and 85 other cell types or tissues"/>
</dbReference>
<dbReference type="ExpressionAtlas" id="Q80U78">
    <property type="expression patterns" value="baseline and differential"/>
</dbReference>
<dbReference type="GO" id="GO:0030424">
    <property type="term" value="C:axon"/>
    <property type="evidence" value="ECO:0007669"/>
    <property type="project" value="Ensembl"/>
</dbReference>
<dbReference type="GO" id="GO:0005737">
    <property type="term" value="C:cytoplasm"/>
    <property type="evidence" value="ECO:0000314"/>
    <property type="project" value="UniProtKB"/>
</dbReference>
<dbReference type="GO" id="GO:0010494">
    <property type="term" value="C:cytoplasmic stress granule"/>
    <property type="evidence" value="ECO:0007669"/>
    <property type="project" value="Ensembl"/>
</dbReference>
<dbReference type="GO" id="GO:0005829">
    <property type="term" value="C:cytosol"/>
    <property type="evidence" value="ECO:0007669"/>
    <property type="project" value="Ensembl"/>
</dbReference>
<dbReference type="GO" id="GO:0005654">
    <property type="term" value="C:nucleoplasm"/>
    <property type="evidence" value="ECO:0007669"/>
    <property type="project" value="Ensembl"/>
</dbReference>
<dbReference type="GO" id="GO:0000932">
    <property type="term" value="C:P-body"/>
    <property type="evidence" value="ECO:0000250"/>
    <property type="project" value="UniProtKB"/>
</dbReference>
<dbReference type="GO" id="GO:0035198">
    <property type="term" value="F:miRNA binding"/>
    <property type="evidence" value="ECO:0007669"/>
    <property type="project" value="Ensembl"/>
</dbReference>
<dbReference type="GO" id="GO:0003730">
    <property type="term" value="F:mRNA 3'-UTR binding"/>
    <property type="evidence" value="ECO:0000314"/>
    <property type="project" value="UniProtKB"/>
</dbReference>
<dbReference type="GO" id="GO:0008344">
    <property type="term" value="P:adult locomotory behavior"/>
    <property type="evidence" value="ECO:0000315"/>
    <property type="project" value="UniProtKB"/>
</dbReference>
<dbReference type="GO" id="GO:0035196">
    <property type="term" value="P:miRNA processing"/>
    <property type="evidence" value="ECO:0000250"/>
    <property type="project" value="UniProtKB"/>
</dbReference>
<dbReference type="GO" id="GO:0061157">
    <property type="term" value="P:mRNA destabilization"/>
    <property type="evidence" value="ECO:0000314"/>
    <property type="project" value="UniProtKB"/>
</dbReference>
<dbReference type="GO" id="GO:2000637">
    <property type="term" value="P:positive regulation of miRNA-mediated gene silencing"/>
    <property type="evidence" value="ECO:0000250"/>
    <property type="project" value="UniProtKB"/>
</dbReference>
<dbReference type="GO" id="GO:1900246">
    <property type="term" value="P:positive regulation of RIG-I signaling pathway"/>
    <property type="evidence" value="ECO:0007669"/>
    <property type="project" value="Ensembl"/>
</dbReference>
<dbReference type="GO" id="GO:0016441">
    <property type="term" value="P:post-transcriptional gene silencing"/>
    <property type="evidence" value="ECO:0000315"/>
    <property type="project" value="UniProtKB"/>
</dbReference>
<dbReference type="GO" id="GO:0010608">
    <property type="term" value="P:post-transcriptional regulation of gene expression"/>
    <property type="evidence" value="ECO:0000315"/>
    <property type="project" value="MGI"/>
</dbReference>
<dbReference type="GO" id="GO:0051726">
    <property type="term" value="P:regulation of cell cycle"/>
    <property type="evidence" value="ECO:0000250"/>
    <property type="project" value="UniProtKB"/>
</dbReference>
<dbReference type="GO" id="GO:0051983">
    <property type="term" value="P:regulation of chromosome segregation"/>
    <property type="evidence" value="ECO:0000250"/>
    <property type="project" value="UniProtKB"/>
</dbReference>
<dbReference type="GO" id="GO:0006417">
    <property type="term" value="P:regulation of translation"/>
    <property type="evidence" value="ECO:0007669"/>
    <property type="project" value="UniProtKB-KW"/>
</dbReference>
<dbReference type="GO" id="GO:0007283">
    <property type="term" value="P:spermatogenesis"/>
    <property type="evidence" value="ECO:0000315"/>
    <property type="project" value="UniProtKB"/>
</dbReference>
<dbReference type="GO" id="GO:0048863">
    <property type="term" value="P:stem cell differentiation"/>
    <property type="evidence" value="ECO:0000315"/>
    <property type="project" value="UniProtKB"/>
</dbReference>
<dbReference type="CDD" id="cd07920">
    <property type="entry name" value="Pumilio"/>
    <property type="match status" value="1"/>
</dbReference>
<dbReference type="FunFam" id="1.25.10.10:FF:000004">
    <property type="entry name" value="Pumilio homolog 1 isoform 2"/>
    <property type="match status" value="1"/>
</dbReference>
<dbReference type="Gene3D" id="1.25.10.10">
    <property type="entry name" value="Leucine-rich Repeat Variant"/>
    <property type="match status" value="1"/>
</dbReference>
<dbReference type="InterPro" id="IPR011989">
    <property type="entry name" value="ARM-like"/>
</dbReference>
<dbReference type="InterPro" id="IPR016024">
    <property type="entry name" value="ARM-type_fold"/>
</dbReference>
<dbReference type="InterPro" id="IPR033133">
    <property type="entry name" value="PUM-HD"/>
</dbReference>
<dbReference type="InterPro" id="IPR033712">
    <property type="entry name" value="Pumilio_RNA-bd"/>
</dbReference>
<dbReference type="InterPro" id="IPR001313">
    <property type="entry name" value="Pumilio_RNA-bd_rpt"/>
</dbReference>
<dbReference type="PANTHER" id="PTHR12537:SF1">
    <property type="entry name" value="PUMILIO HOMOLOG 1"/>
    <property type="match status" value="1"/>
</dbReference>
<dbReference type="PANTHER" id="PTHR12537">
    <property type="entry name" value="RNA BINDING PROTEIN PUMILIO-RELATED"/>
    <property type="match status" value="1"/>
</dbReference>
<dbReference type="Pfam" id="PF00806">
    <property type="entry name" value="PUF"/>
    <property type="match status" value="8"/>
</dbReference>
<dbReference type="SMART" id="SM00025">
    <property type="entry name" value="Pumilio"/>
    <property type="match status" value="8"/>
</dbReference>
<dbReference type="SUPFAM" id="SSF48371">
    <property type="entry name" value="ARM repeat"/>
    <property type="match status" value="1"/>
</dbReference>
<dbReference type="PROSITE" id="PS50302">
    <property type="entry name" value="PUM"/>
    <property type="match status" value="8"/>
</dbReference>
<dbReference type="PROSITE" id="PS50303">
    <property type="entry name" value="PUM_HD"/>
    <property type="match status" value="1"/>
</dbReference>
<feature type="initiator methionine" description="Removed" evidence="1">
    <location>
        <position position="1"/>
    </location>
</feature>
<feature type="chain" id="PRO_0000075918" description="Pumilio homolog 1">
    <location>
        <begin position="2"/>
        <end position="1189"/>
    </location>
</feature>
<feature type="domain" description="PUM-HD" evidence="3">
    <location>
        <begin position="829"/>
        <end position="1171"/>
    </location>
</feature>
<feature type="repeat" description="Pumilio 1">
    <location>
        <begin position="849"/>
        <end position="884"/>
    </location>
</feature>
<feature type="repeat" description="Pumilio 2">
    <location>
        <begin position="885"/>
        <end position="920"/>
    </location>
</feature>
<feature type="repeat" description="Pumilio 3">
    <location>
        <begin position="921"/>
        <end position="958"/>
    </location>
</feature>
<feature type="repeat" description="Pumilio 4">
    <location>
        <begin position="959"/>
        <end position="994"/>
    </location>
</feature>
<feature type="repeat" description="Pumilio 5">
    <location>
        <begin position="995"/>
        <end position="1030"/>
    </location>
</feature>
<feature type="repeat" description="Pumilio 6">
    <location>
        <begin position="1031"/>
        <end position="1066"/>
    </location>
</feature>
<feature type="repeat" description="Pumilio 7">
    <location>
        <begin position="1067"/>
        <end position="1102"/>
    </location>
</feature>
<feature type="repeat" description="Pumilio 8">
    <location>
        <begin position="1106"/>
        <end position="1145"/>
    </location>
</feature>
<feature type="region of interest" description="Disordered" evidence="4">
    <location>
        <begin position="22"/>
        <end position="73"/>
    </location>
</feature>
<feature type="region of interest" description="Disordered" evidence="4">
    <location>
        <begin position="233"/>
        <end position="272"/>
    </location>
</feature>
<feature type="region of interest" description="Disordered" evidence="4">
    <location>
        <begin position="491"/>
        <end position="525"/>
    </location>
</feature>
<feature type="region of interest" description="Disordered" evidence="4">
    <location>
        <begin position="614"/>
        <end position="647"/>
    </location>
</feature>
<feature type="region of interest" description="Disordered" evidence="4">
    <location>
        <begin position="743"/>
        <end position="773"/>
    </location>
</feature>
<feature type="region of interest" description="Adenine-nucleotide binding in RNA target" evidence="1">
    <location>
        <begin position="864"/>
        <end position="868"/>
    </location>
</feature>
<feature type="region of interest" description="Uracil-nucleotide binding in RNA target" evidence="1">
    <location>
        <begin position="900"/>
        <end position="904"/>
    </location>
</feature>
<feature type="region of interest" description="Adenine-nucleotide binding in RNA target" evidence="1">
    <location>
        <begin position="936"/>
        <end position="940"/>
    </location>
</feature>
<feature type="region of interest" description="Non-specific-nucleotide binding in RNA target" evidence="1">
    <location>
        <begin position="974"/>
        <end position="978"/>
    </location>
</feature>
<feature type="region of interest" description="Adenine-nucleotide binding in RNA target" evidence="1">
    <location>
        <begin position="1010"/>
        <end position="1014"/>
    </location>
</feature>
<feature type="region of interest" description="Uracil-nucleotide binding in RNA target" evidence="1">
    <location>
        <begin position="1046"/>
        <end position="1050"/>
    </location>
</feature>
<feature type="region of interest" description="Guanine-nucleotide binding in RNA target" evidence="1">
    <location>
        <begin position="1082"/>
        <end position="1086"/>
    </location>
</feature>
<feature type="region of interest" description="Guanine-nucleotide binding in RNA target" evidence="1">
    <location>
        <begin position="1083"/>
        <end position="1086"/>
    </location>
</feature>
<feature type="region of interest" description="Uracil-nucleotide binding in RNA target" evidence="1">
    <location>
        <begin position="1125"/>
        <end position="1129"/>
    </location>
</feature>
<feature type="compositionally biased region" description="Low complexity" evidence="4">
    <location>
        <begin position="45"/>
        <end position="58"/>
    </location>
</feature>
<feature type="compositionally biased region" description="Basic and acidic residues" evidence="4">
    <location>
        <begin position="250"/>
        <end position="272"/>
    </location>
</feature>
<feature type="compositionally biased region" description="Low complexity" evidence="4">
    <location>
        <begin position="491"/>
        <end position="503"/>
    </location>
</feature>
<feature type="compositionally biased region" description="Polar residues" evidence="4">
    <location>
        <begin position="512"/>
        <end position="525"/>
    </location>
</feature>
<feature type="compositionally biased region" description="Low complexity" evidence="4">
    <location>
        <begin position="627"/>
        <end position="647"/>
    </location>
</feature>
<feature type="compositionally biased region" description="Low complexity" evidence="4">
    <location>
        <begin position="764"/>
        <end position="773"/>
    </location>
</feature>
<feature type="modified residue" description="N-acetylserine" evidence="1">
    <location>
        <position position="2"/>
    </location>
</feature>
<feature type="modified residue" description="Phosphoserine" evidence="1">
    <location>
        <position position="19"/>
    </location>
</feature>
<feature type="modified residue" description="Phosphoserine" evidence="17">
    <location>
        <position position="75"/>
    </location>
</feature>
<feature type="modified residue" description="Phosphoserine" evidence="1">
    <location>
        <position position="98"/>
    </location>
</feature>
<feature type="modified residue" description="Phosphoserine" evidence="1">
    <location>
        <position position="106"/>
    </location>
</feature>
<feature type="modified residue" description="Phosphothreonine" evidence="1">
    <location>
        <position position="112"/>
    </location>
</feature>
<feature type="modified residue" description="Phosphoserine" evidence="15 17">
    <location>
        <position position="124"/>
    </location>
</feature>
<feature type="modified residue" description="Phosphoserine" evidence="1">
    <location>
        <position position="159"/>
    </location>
</feature>
<feature type="modified residue" description="Phosphoserine" evidence="1">
    <location>
        <position position="197"/>
    </location>
</feature>
<feature type="modified residue" description="Phosphoserine" evidence="1">
    <location>
        <position position="209"/>
    </location>
</feature>
<feature type="modified residue" description="Phosphoserine" evidence="17">
    <location>
        <position position="229"/>
    </location>
</feature>
<feature type="modified residue" description="Phosphoserine" evidence="2">
    <location>
        <position position="305"/>
    </location>
</feature>
<feature type="modified residue" description="Phosphothreonine" evidence="2">
    <location>
        <position position="515"/>
    </location>
</feature>
<feature type="modified residue" description="Phosphoserine" evidence="15 16 17">
    <location>
        <position position="710"/>
    </location>
</feature>
<feature type="modified residue" description="Phosphoserine" evidence="1">
    <location>
        <position position="715"/>
    </location>
</feature>
<feature type="modified residue" description="Omega-N-methylarginine" evidence="1">
    <location>
        <position position="797"/>
    </location>
</feature>
<feature type="modified residue" description="Phosphoserine" evidence="1">
    <location>
        <position position="807"/>
    </location>
</feature>
<feature type="modified residue" description="Phosphoserine" evidence="1">
    <location>
        <position position="823"/>
    </location>
</feature>
<feature type="splice variant" id="VSP_009315" description="In isoform 4." evidence="12">
    <original>DHSVSQPIM</original>
    <variation>GNLALASLL</variation>
    <location>
        <begin position="181"/>
        <end position="189"/>
    </location>
</feature>
<feature type="splice variant" id="VSP_009316" description="In isoform 4." evidence="12">
    <location>
        <begin position="190"/>
        <end position="1189"/>
    </location>
</feature>
<feature type="splice variant" id="VSP_009317" description="In isoform 2 and isoform 3." evidence="11">
    <location>
        <position position="418"/>
    </location>
</feature>
<feature type="splice variant" id="VSP_009318" description="In isoform 2." evidence="11">
    <location>
        <begin position="952"/>
        <end position="953"/>
    </location>
</feature>
<feature type="sequence conflict" description="In Ref. 1; AAG42319." evidence="13" ref="1">
    <original>Q</original>
    <variation>H</variation>
    <location>
        <position position="186"/>
    </location>
</feature>
<feature type="sequence conflict" description="In Ref. 1; AAG42319." evidence="13" ref="1">
    <original>A</original>
    <variation>D</variation>
    <location>
        <position position="545"/>
    </location>
</feature>
<feature type="sequence conflict" description="In Ref. 1; AAG42319." evidence="13" ref="1">
    <original>P</original>
    <variation>T</variation>
    <location>
        <position position="552"/>
    </location>
</feature>
<feature type="sequence conflict" description="In Ref. 1; AAG42319." evidence="13" ref="1">
    <original>A</original>
    <variation>G</variation>
    <location>
        <position position="555"/>
    </location>
</feature>
<proteinExistence type="evidence at protein level"/>
<keyword id="KW-0007">Acetylation</keyword>
<keyword id="KW-0025">Alternative splicing</keyword>
<keyword id="KW-0963">Cytoplasm</keyword>
<keyword id="KW-0221">Differentiation</keyword>
<keyword id="KW-0488">Methylation</keyword>
<keyword id="KW-0597">Phosphoprotein</keyword>
<keyword id="KW-1185">Reference proteome</keyword>
<keyword id="KW-0677">Repeat</keyword>
<keyword id="KW-0694">RNA-binding</keyword>
<keyword id="KW-0744">Spermatogenesis</keyword>
<keyword id="KW-0810">Translation regulation</keyword>
<sequence length="1189" mass="126619">MSVACVLKRKAVLWQDSFSPHLKHHPQEPANPNMPVVLTSGTGSQAQPQPAANQALAAGTHSSPVPGSIGVAGRSQDDAMVDYFFQRQHGEQLGGGGSGGGGYNTSKHRWPTGDNIHAEHQVRSMDELNHDFQALALEGRAMGEQLLPGKKFWETDESSKDGPKGIFLGDQWRDSAWGTSDHSVSQPIMVQRRPGQSFHVNSEVNSVLSPRSESGGLGVSMVEYVLSSSPGDSCLRKGGFGPRDADSDENDKGEKKNKGTFDGDKLGDLKEEGDVMDKTNGLPVQNGIDADVKDFSRTPGNCQNSANEVDLLGPNQNGSEGLAQLTSTNGAKPVEDFSNMESQSVPLDPMEHVGMEPLQFDYSGTQVPVDSAAATVGLFDYNSQQQLFQRPNALAVQQLTAAQQQQYALAAAHQPHIAGLAPAAFVPNPYIISAAPPGTDPYTAGLAAAATLGPAVVPHQYYGVTPWGVYPASLFQQQAAAAAAATNSATQQSAPQAQQGQQQVLRGGASQRPLTPNQNQQGQQTDPLVAAAAVNSALAFGQGLAAGMPGYPVLAPAAYYDQTGALVVNAGARNGLGAPVRLVAPAPVIISSSAAQAAVAAAAASANGAAGGLAGTTNGPFRPLGTQQPQPQPQQQPSNNLASSSFYGNNSLSSNSQSSSLFSQGSAQPANTSLGFGSSSSLGATLGSALGGFGTAVANSNTGSGSRRDSLTGSSDLYKRTSSSLAPIGHSFYSSLSYSSSPGPVGMPLPSQGPGHSQTPPPSLSSHGSSSSLNLGGLTNGSGRYISAAPGAEAKYRSASSASSLFSPSSTLFSSSRLRYGMSDVMPSGRSRLLEDFRNNRYPNLQLREIAGHIMEFSQDQHGSRFIQLKLERATAAERQLVFNEILQAAYQLMVDVFGNYVIQKFFEFGSHEQKLALAERIRGHVLSLALQMYGCRVIQKALEFIPSDQQVINEMVRELDGHVLKCVKDQNGNHVVQKCIECVQPQSLQFIIDAFKGQVFALSTHPYGCRVIQRILEHCLPDQTLPILEELHQHTEQLVQDQYGNYVIQHVLEHGRPEDKSKIVAEIRGNVLVLSQHKFASNVVEKCVTHASRTERAVLIDEVCTMNDGPHSALYTMMKDQYANYVVQKMIDVAEPGQRKIVMHKIRPHIATLRKYTYGKHILAKLEKYYMKNGVDLGPICGPPNGII</sequence>
<accession>Q80U78</accession>
<accession>Q80X96</accession>
<accession>Q80YU8</accession>
<accession>Q8BPV7</accession>
<accession>Q9EPU6</accession>
<evidence type="ECO:0000250" key="1">
    <source>
        <dbReference type="UniProtKB" id="Q14671"/>
    </source>
</evidence>
<evidence type="ECO:0000250" key="2">
    <source>
        <dbReference type="UniProtKB" id="Q8TB72"/>
    </source>
</evidence>
<evidence type="ECO:0000255" key="3">
    <source>
        <dbReference type="PROSITE-ProRule" id="PRU00318"/>
    </source>
</evidence>
<evidence type="ECO:0000256" key="4">
    <source>
        <dbReference type="SAM" id="MobiDB-lite"/>
    </source>
</evidence>
<evidence type="ECO:0000269" key="5">
    <source>
    </source>
</evidence>
<evidence type="ECO:0000269" key="6">
    <source>
    </source>
</evidence>
<evidence type="ECO:0000269" key="7">
    <source>
    </source>
</evidence>
<evidence type="ECO:0000269" key="8">
    <source>
    </source>
</evidence>
<evidence type="ECO:0000269" key="9">
    <source>
    </source>
</evidence>
<evidence type="ECO:0000303" key="10">
    <source>
    </source>
</evidence>
<evidence type="ECO:0000303" key="11">
    <source>
    </source>
</evidence>
<evidence type="ECO:0000303" key="12">
    <source>
    </source>
</evidence>
<evidence type="ECO:0000305" key="13"/>
<evidence type="ECO:0000312" key="14">
    <source>
        <dbReference type="MGI" id="MGI:1931749"/>
    </source>
</evidence>
<evidence type="ECO:0007744" key="15">
    <source>
    </source>
</evidence>
<evidence type="ECO:0007744" key="16">
    <source>
    </source>
</evidence>
<evidence type="ECO:0007744" key="17">
    <source>
    </source>
</evidence>
<protein>
    <recommendedName>
        <fullName evidence="13">Pumilio homolog 1</fullName>
    </recommendedName>
</protein>
<comment type="function">
    <text evidence="1 6 7 8">Sequence-specific RNA-binding protein that acts as a post-transcriptional repressor by binding the 3'-UTR of mRNA targets. Binds to an RNA consensus sequence, the Pumilio Response Element (PRE), 5'-UGUANAUA-3', that is related to the Nanos Response Element (NRE). Mediates post-transcriptional repression of transcripts via different mechanisms: acts via direct recruitment of the CCR4-POP2-NOT deadenylase leading to translational inhibition and mRNA degradation. Also mediates deadenylation-independent repression by promoting accessibility of miRNAs. Following growth factor stimulation, phosphorylated and binds to the 3'-UTR of CDKN1B/p27 mRNA, inducing a local conformational change that exposes miRNA-binding sites, promoting association of miR-221 and miR-222, efficient suppression of CDKN1B/p27 expression, and rapid entry to the cell cycle (By similarity). Acts as a post-transcriptional repressor of E2F3 mRNAs by binding to its 3'-UTR and facilitating miRNA regulation (By similarity). Represses a program of genes necessary to maintain genomic stability such as key mitotic, DNA repair and DNA replication factors. Its ability to repress those target mRNAs is regulated by the lncRNA NORAD (non-coding RNA activated by DNA damage) which, due to its high abundance and multitude of PUMILIO binding sites, is able to sequester a significant fraction of PUM1 and PUM2 in the cytoplasm (By similarity). Involved in neuronal functions by regulating ATXN1 mRNA levels: acts by binding to the 3'-UTR of ATXN1 transcripts, leading to their down-regulation independently of the miRNA machinery (PubMed:25768905). In testis, acts as a post-transcriptional regulator of spermatogenesis by binding to the 3'-UTR of mRNAs coding for regulators of p53/TP53 (PubMed:22342750). Involved in embryonic stem cell renewal by facilitating the exit from the ground state: acts by targeting mRNAs coding for naive pluripotency transcription factors and accelerates their down-regulation at the onset of differentiation (PubMed:24412312). Binds specifically to miRNA MIR199A precursor, with PUM2, regulates miRNA MIR199A expression at a postranscriptional level (By similarity).</text>
</comment>
<comment type="subunit">
    <text evidence="1">Recruits the CCR4-POP2-NOT deadenylase leading to translational inhibition and mRNA degradation (By similarity). Interacts with TRIM71 (via NHL repeats) in an RNA-dependent manner (By similarity).</text>
</comment>
<comment type="subcellular location">
    <subcellularLocation>
        <location evidence="6">Cytoplasm</location>
    </subcellularLocation>
    <subcellularLocation>
        <location evidence="1">Cytoplasm</location>
        <location evidence="1">P-body</location>
    </subcellularLocation>
    <subcellularLocation>
        <location evidence="1">Cytoplasmic granule</location>
    </subcellularLocation>
</comment>
<comment type="alternative products">
    <event type="alternative splicing"/>
    <isoform>
        <id>Q80U78-1</id>
        <name>1</name>
        <sequence type="displayed"/>
    </isoform>
    <isoform>
        <id>Q80U78-2</id>
        <name>2</name>
        <sequence type="described" ref="VSP_009317 VSP_009318"/>
    </isoform>
    <isoform>
        <id>Q80U78-3</id>
        <name>3</name>
        <sequence type="described" ref="VSP_009317"/>
    </isoform>
    <isoform>
        <id>Q80U78-4</id>
        <name>4</name>
        <sequence type="described" ref="VSP_009315 VSP_009316"/>
    </isoform>
</comment>
<comment type="tissue specificity">
    <text evidence="5 6 8">Widely expressed. Expressed in brain, heart, kidney, liver, lung, skin, intestine, spleen, testis and thymus. Weakly or not expressed in muscles and stomach. Expressed at various stages of myeloid and lymphoid cell development (PubMed:12667987). Highly expressed in testis (PubMed:22342750). Expressed in all major brain regions (at protein level) (PubMed:25768905).</text>
</comment>
<comment type="developmental stage">
    <text evidence="6">During the development of the testis, expressed 2 days postpartum (dpp) and then starts to increase at 14 dpp when pachytene spermatocytes first appear.</text>
</comment>
<comment type="domain">
    <text evidence="1">The pumilio repeats mediate the association with RNA by packing together to form a right-handed superhelix that approximates a half donut. RNA-binding occurs on the concave side of the surface. PUM1 is composed of 8 pumilio repeats of 36 residues; each repeat binds a single nucleotide in its RNA target. Residues at positions 12 and 16 of the pumilio repeat bind each RNA base via hydrogen bonding or van der Waals contacts with the Watson-Crick edge, while the amino acid at position 13 makes a stacking interaction. The recognition of RNA by pumilio repeats is base specific: cysteine and glutamine at position 12 and 16, respectively, bind adenine; asparagine and glutamine bind uracil; and serine and glutamate bind guanine.</text>
</comment>
<comment type="PTM">
    <text evidence="1">Phosphorylation at Ser-715 promotes RNA-binding activity. Following growth factor stimulation phosphorylated at Ser-715, promoting binding to the 3'-UTR of CDKN1B/p27 mRNA.</text>
</comment>
<comment type="disruption phenotype">
    <text evidence="6 8 9">Mice are viable and grow to adulthood without apparent defects except that they are smaller than wild-type mice at 8 weeks of age (PubMed:22342750, PubMed:25768905). Males mice however show significantly reduced sperm counts and fertility: testicular hypoplasia is observed (PubMed:22342750). Heterozygous knockout mice manifest neurological dysfunction, hyperactivity, and progressive cerebellar signs including gross and fine motor incoordination (PubMed:25768905, PubMed:29474920). They show spontaneous seizures, abnormal EEG activity with generalized epileptiform spikes by the age of 16 weeks, and have smaller than normal cerebella (PubMed:29474920).</text>
</comment>
<comment type="sequence caution" evidence="13">
    <conflict type="erroneous initiation">
        <sequence resource="EMBL-CDS" id="BAC65487"/>
    </conflict>
    <text>Extended N-terminus.</text>
</comment>
<reference key="1">
    <citation type="journal article" date="2003" name="Blood Cells Mol. Dis.">
        <title>Mouse Pum1 and Pum2 genes, members of the Pumilio family of RNA-binding proteins, show differential expression in fetal and adult hematopoietic stem cells and progenitors.</title>
        <authorList>
            <person name="Spassov D.S."/>
            <person name="Jurecic R."/>
        </authorList>
    </citation>
    <scope>NUCLEOTIDE SEQUENCE [MRNA] (ISOFORM 1)</scope>
    <scope>TISSUE SPECIFICITY</scope>
    <source>
        <strain>C57BL/6J</strain>
    </source>
</reference>
<reference key="2">
    <citation type="journal article" date="2003" name="DNA Res.">
        <title>Prediction of the coding sequences of mouse homologues of KIAA gene: II. The complete nucleotide sequences of 400 mouse KIAA-homologous cDNAs identified by screening of terminal sequences of cDNA clones randomly sampled from size-fractionated libraries.</title>
        <authorList>
            <person name="Okazaki N."/>
            <person name="Kikuno R."/>
            <person name="Ohara R."/>
            <person name="Inamoto S."/>
            <person name="Aizawa H."/>
            <person name="Yuasa S."/>
            <person name="Nakajima D."/>
            <person name="Nagase T."/>
            <person name="Ohara O."/>
            <person name="Koga H."/>
        </authorList>
    </citation>
    <scope>NUCLEOTIDE SEQUENCE [LARGE SCALE MRNA] (ISOFORM 1)</scope>
    <source>
        <tissue>Brain</tissue>
    </source>
</reference>
<reference key="3">
    <citation type="journal article" date="2005" name="Science">
        <title>The transcriptional landscape of the mammalian genome.</title>
        <authorList>
            <person name="Carninci P."/>
            <person name="Kasukawa T."/>
            <person name="Katayama S."/>
            <person name="Gough J."/>
            <person name="Frith M.C."/>
            <person name="Maeda N."/>
            <person name="Oyama R."/>
            <person name="Ravasi T."/>
            <person name="Lenhard B."/>
            <person name="Wells C."/>
            <person name="Kodzius R."/>
            <person name="Shimokawa K."/>
            <person name="Bajic V.B."/>
            <person name="Brenner S.E."/>
            <person name="Batalov S."/>
            <person name="Forrest A.R."/>
            <person name="Zavolan M."/>
            <person name="Davis M.J."/>
            <person name="Wilming L.G."/>
            <person name="Aidinis V."/>
            <person name="Allen J.E."/>
            <person name="Ambesi-Impiombato A."/>
            <person name="Apweiler R."/>
            <person name="Aturaliya R.N."/>
            <person name="Bailey T.L."/>
            <person name="Bansal M."/>
            <person name="Baxter L."/>
            <person name="Beisel K.W."/>
            <person name="Bersano T."/>
            <person name="Bono H."/>
            <person name="Chalk A.M."/>
            <person name="Chiu K.P."/>
            <person name="Choudhary V."/>
            <person name="Christoffels A."/>
            <person name="Clutterbuck D.R."/>
            <person name="Crowe M.L."/>
            <person name="Dalla E."/>
            <person name="Dalrymple B.P."/>
            <person name="de Bono B."/>
            <person name="Della Gatta G."/>
            <person name="di Bernardo D."/>
            <person name="Down T."/>
            <person name="Engstrom P."/>
            <person name="Fagiolini M."/>
            <person name="Faulkner G."/>
            <person name="Fletcher C.F."/>
            <person name="Fukushima T."/>
            <person name="Furuno M."/>
            <person name="Futaki S."/>
            <person name="Gariboldi M."/>
            <person name="Georgii-Hemming P."/>
            <person name="Gingeras T.R."/>
            <person name="Gojobori T."/>
            <person name="Green R.E."/>
            <person name="Gustincich S."/>
            <person name="Harbers M."/>
            <person name="Hayashi Y."/>
            <person name="Hensch T.K."/>
            <person name="Hirokawa N."/>
            <person name="Hill D."/>
            <person name="Huminiecki L."/>
            <person name="Iacono M."/>
            <person name="Ikeo K."/>
            <person name="Iwama A."/>
            <person name="Ishikawa T."/>
            <person name="Jakt M."/>
            <person name="Kanapin A."/>
            <person name="Katoh M."/>
            <person name="Kawasawa Y."/>
            <person name="Kelso J."/>
            <person name="Kitamura H."/>
            <person name="Kitano H."/>
            <person name="Kollias G."/>
            <person name="Krishnan S.P."/>
            <person name="Kruger A."/>
            <person name="Kummerfeld S.K."/>
            <person name="Kurochkin I.V."/>
            <person name="Lareau L.F."/>
            <person name="Lazarevic D."/>
            <person name="Lipovich L."/>
            <person name="Liu J."/>
            <person name="Liuni S."/>
            <person name="McWilliam S."/>
            <person name="Madan Babu M."/>
            <person name="Madera M."/>
            <person name="Marchionni L."/>
            <person name="Matsuda H."/>
            <person name="Matsuzawa S."/>
            <person name="Miki H."/>
            <person name="Mignone F."/>
            <person name="Miyake S."/>
            <person name="Morris K."/>
            <person name="Mottagui-Tabar S."/>
            <person name="Mulder N."/>
            <person name="Nakano N."/>
            <person name="Nakauchi H."/>
            <person name="Ng P."/>
            <person name="Nilsson R."/>
            <person name="Nishiguchi S."/>
            <person name="Nishikawa S."/>
            <person name="Nori F."/>
            <person name="Ohara O."/>
            <person name="Okazaki Y."/>
            <person name="Orlando V."/>
            <person name="Pang K.C."/>
            <person name="Pavan W.J."/>
            <person name="Pavesi G."/>
            <person name="Pesole G."/>
            <person name="Petrovsky N."/>
            <person name="Piazza S."/>
            <person name="Reed J."/>
            <person name="Reid J.F."/>
            <person name="Ring B.Z."/>
            <person name="Ringwald M."/>
            <person name="Rost B."/>
            <person name="Ruan Y."/>
            <person name="Salzberg S.L."/>
            <person name="Sandelin A."/>
            <person name="Schneider C."/>
            <person name="Schoenbach C."/>
            <person name="Sekiguchi K."/>
            <person name="Semple C.A."/>
            <person name="Seno S."/>
            <person name="Sessa L."/>
            <person name="Sheng Y."/>
            <person name="Shibata Y."/>
            <person name="Shimada H."/>
            <person name="Shimada K."/>
            <person name="Silva D."/>
            <person name="Sinclair B."/>
            <person name="Sperling S."/>
            <person name="Stupka E."/>
            <person name="Sugiura K."/>
            <person name="Sultana R."/>
            <person name="Takenaka Y."/>
            <person name="Taki K."/>
            <person name="Tammoja K."/>
            <person name="Tan S.L."/>
            <person name="Tang S."/>
            <person name="Taylor M.S."/>
            <person name="Tegner J."/>
            <person name="Teichmann S.A."/>
            <person name="Ueda H.R."/>
            <person name="van Nimwegen E."/>
            <person name="Verardo R."/>
            <person name="Wei C.L."/>
            <person name="Yagi K."/>
            <person name="Yamanishi H."/>
            <person name="Zabarovsky E."/>
            <person name="Zhu S."/>
            <person name="Zimmer A."/>
            <person name="Hide W."/>
            <person name="Bult C."/>
            <person name="Grimmond S.M."/>
            <person name="Teasdale R.D."/>
            <person name="Liu E.T."/>
            <person name="Brusic V."/>
            <person name="Quackenbush J."/>
            <person name="Wahlestedt C."/>
            <person name="Mattick J.S."/>
            <person name="Hume D.A."/>
            <person name="Kai C."/>
            <person name="Sasaki D."/>
            <person name="Tomaru Y."/>
            <person name="Fukuda S."/>
            <person name="Kanamori-Katayama M."/>
            <person name="Suzuki M."/>
            <person name="Aoki J."/>
            <person name="Arakawa T."/>
            <person name="Iida J."/>
            <person name="Imamura K."/>
            <person name="Itoh M."/>
            <person name="Kato T."/>
            <person name="Kawaji H."/>
            <person name="Kawagashira N."/>
            <person name="Kawashima T."/>
            <person name="Kojima M."/>
            <person name="Kondo S."/>
            <person name="Konno H."/>
            <person name="Nakano K."/>
            <person name="Ninomiya N."/>
            <person name="Nishio T."/>
            <person name="Okada M."/>
            <person name="Plessy C."/>
            <person name="Shibata K."/>
            <person name="Shiraki T."/>
            <person name="Suzuki S."/>
            <person name="Tagami M."/>
            <person name="Waki K."/>
            <person name="Watahiki A."/>
            <person name="Okamura-Oho Y."/>
            <person name="Suzuki H."/>
            <person name="Kawai J."/>
            <person name="Hayashizaki Y."/>
        </authorList>
    </citation>
    <scope>NUCLEOTIDE SEQUENCE [LARGE SCALE MRNA] (ISOFORM 4)</scope>
    <source>
        <strain>C57BL/6J</strain>
        <tissue>Eye</tissue>
    </source>
</reference>
<reference key="4">
    <citation type="journal article" date="2004" name="Genome Res.">
        <title>The status, quality, and expansion of the NIH full-length cDNA project: the Mammalian Gene Collection (MGC).</title>
        <authorList>
            <consortium name="The MGC Project Team"/>
        </authorList>
    </citation>
    <scope>NUCLEOTIDE SEQUENCE [LARGE SCALE MRNA] (ISOFORMS 2 AND 3)</scope>
    <source>
        <strain>C57BL/6J</strain>
        <tissue>Brain</tissue>
    </source>
</reference>
<reference key="5">
    <citation type="journal article" date="2007" name="Proc. Natl. Acad. Sci. U.S.A.">
        <title>Large-scale phosphorylation analysis of mouse liver.</title>
        <authorList>
            <person name="Villen J."/>
            <person name="Beausoleil S.A."/>
            <person name="Gerber S.A."/>
            <person name="Gygi S.P."/>
        </authorList>
    </citation>
    <scope>PHOSPHORYLATION [LARGE SCALE ANALYSIS] AT SER-124 AND SER-710</scope>
    <scope>IDENTIFICATION BY MASS SPECTROMETRY [LARGE SCALE ANALYSIS]</scope>
    <source>
        <tissue>Liver</tissue>
    </source>
</reference>
<reference key="6">
    <citation type="journal article" date="2009" name="Immunity">
        <title>The phagosomal proteome in interferon-gamma-activated macrophages.</title>
        <authorList>
            <person name="Trost M."/>
            <person name="English L."/>
            <person name="Lemieux S."/>
            <person name="Courcelles M."/>
            <person name="Desjardins M."/>
            <person name="Thibault P."/>
        </authorList>
    </citation>
    <scope>PHOSPHORYLATION [LARGE SCALE ANALYSIS] AT SER-710</scope>
    <scope>IDENTIFICATION BY MASS SPECTROMETRY [LARGE SCALE ANALYSIS]</scope>
</reference>
<reference key="7">
    <citation type="journal article" date="2010" name="Cell">
        <title>A tissue-specific atlas of mouse protein phosphorylation and expression.</title>
        <authorList>
            <person name="Huttlin E.L."/>
            <person name="Jedrychowski M.P."/>
            <person name="Elias J.E."/>
            <person name="Goswami T."/>
            <person name="Rad R."/>
            <person name="Beausoleil S.A."/>
            <person name="Villen J."/>
            <person name="Haas W."/>
            <person name="Sowa M.E."/>
            <person name="Gygi S.P."/>
        </authorList>
    </citation>
    <scope>PHOSPHORYLATION [LARGE SCALE ANALYSIS] AT SER-75; SER-124; SER-229 AND SER-710</scope>
    <scope>IDENTIFICATION BY MASS SPECTROMETRY [LARGE SCALE ANALYSIS]</scope>
    <source>
        <tissue>Brain</tissue>
        <tissue>Brown adipose tissue</tissue>
        <tissue>Heart</tissue>
        <tissue>Kidney</tissue>
        <tissue>Lung</tissue>
        <tissue>Pancreas</tissue>
        <tissue>Spleen</tissue>
        <tissue>Testis</tissue>
    </source>
</reference>
<reference key="8">
    <citation type="journal article" date="2012" name="Curr. Biol.">
        <title>Pumilio 1 suppresses multiple activators of p53 to safeguard spermatogenesis.</title>
        <authorList>
            <person name="Chen D."/>
            <person name="Zheng W."/>
            <person name="Lin A."/>
            <person name="Uyhazi K."/>
            <person name="Zhao H."/>
            <person name="Lin H."/>
        </authorList>
    </citation>
    <scope>FUNCTION</scope>
    <scope>SUBCELLULAR LOCATION</scope>
    <scope>DISRUPTION PHENOTYPE</scope>
    <scope>TISSUE SPECIFICITY</scope>
    <scope>DEVELOPMENTAL STAGE</scope>
</reference>
<reference key="9">
    <citation type="journal article" date="2014" name="Cell Stem Cell">
        <title>Genetic exploration of the exit from self-renewal using haploid embryonic stem cells.</title>
        <authorList>
            <person name="Leeb M."/>
            <person name="Dietmann S."/>
            <person name="Paramor M."/>
            <person name="Niwa H."/>
            <person name="Smith A."/>
        </authorList>
    </citation>
    <scope>FUNCTION</scope>
</reference>
<reference key="10">
    <citation type="journal article" date="2015" name="Cell">
        <title>Pumilio1 haploinsufficiency leads to SCA1-like neurodegeneration by increasing wild-type Ataxin1 levels.</title>
        <authorList>
            <person name="Gennarino V.A."/>
            <person name="Singh R.K."/>
            <person name="White J.J."/>
            <person name="De Maio A."/>
            <person name="Han K."/>
            <person name="Kim J.Y."/>
            <person name="Jafar-Nejad P."/>
            <person name="di Ronza A."/>
            <person name="Kang H."/>
            <person name="Sayegh L.S."/>
            <person name="Cooper T.A."/>
            <person name="Orr H.T."/>
            <person name="Sillitoe R.V."/>
            <person name="Zoghbi H.Y."/>
        </authorList>
    </citation>
    <scope>FUNCTION</scope>
    <scope>TISSUE SPECIFICITY</scope>
    <scope>DISRUPTION PHENOTYPE</scope>
</reference>
<reference key="11">
    <citation type="journal article" date="2018" name="Cell">
        <title>A mild PUM1 mutation is associated with adult-onset ataxia, whereas haploinsufficiency causes developmental delay and seizures.</title>
        <authorList>
            <person name="Gennarino V.A."/>
            <person name="Palmer E.E."/>
            <person name="McDonell L.M."/>
            <person name="Wang L."/>
            <person name="Adamski C.J."/>
            <person name="Koire A."/>
            <person name="See L."/>
            <person name="Chen C.A."/>
            <person name="Schaaf C.P."/>
            <person name="Rosenfeld J.A."/>
            <person name="Panzer J.A."/>
            <person name="Moog U."/>
            <person name="Hao S."/>
            <person name="Bye A."/>
            <person name="Kirk E.P."/>
            <person name="Stankiewicz P."/>
            <person name="Breman A.M."/>
            <person name="McBride A."/>
            <person name="Kandula T."/>
            <person name="Dubbs H.A."/>
            <person name="Macintosh R."/>
            <person name="Cardamone M."/>
            <person name="Zhu Y."/>
            <person name="Ying K."/>
            <person name="Dias K.R."/>
            <person name="Cho M.T."/>
            <person name="Henderson L.B."/>
            <person name="Baskin B."/>
            <person name="Morris P."/>
            <person name="Tao J."/>
            <person name="Cowley M.J."/>
            <person name="Dinger M.E."/>
            <person name="Roscioli T."/>
            <person name="Caluseriu O."/>
            <person name="Suchowersky O."/>
            <person name="Sachdev R.K."/>
            <person name="Lichtarge O."/>
            <person name="Tang J."/>
            <person name="Boycott K.M."/>
            <person name="Holder J.L. Jr."/>
            <person name="Zoghbi H.Y."/>
        </authorList>
    </citation>
    <scope>DISRUPTION PHENOTYPE</scope>
</reference>
<gene>
    <name evidence="14" type="primary">Pum1</name>
    <name evidence="10" type="synonym">Kiaa0099</name>
</gene>
<organism>
    <name type="scientific">Mus musculus</name>
    <name type="common">Mouse</name>
    <dbReference type="NCBI Taxonomy" id="10090"/>
    <lineage>
        <taxon>Eukaryota</taxon>
        <taxon>Metazoa</taxon>
        <taxon>Chordata</taxon>
        <taxon>Craniata</taxon>
        <taxon>Vertebrata</taxon>
        <taxon>Euteleostomi</taxon>
        <taxon>Mammalia</taxon>
        <taxon>Eutheria</taxon>
        <taxon>Euarchontoglires</taxon>
        <taxon>Glires</taxon>
        <taxon>Rodentia</taxon>
        <taxon>Myomorpha</taxon>
        <taxon>Muroidea</taxon>
        <taxon>Muridae</taxon>
        <taxon>Murinae</taxon>
        <taxon>Mus</taxon>
        <taxon>Mus</taxon>
    </lineage>
</organism>
<name>PUM1_MOUSE</name>